<evidence type="ECO:0000255" key="1">
    <source>
        <dbReference type="HAMAP-Rule" id="MF_00083"/>
    </source>
</evidence>
<protein>
    <recommendedName>
        <fullName evidence="1">Peptidyl-tRNA hydrolase</fullName>
        <shortName evidence="1">Pth</shortName>
        <ecNumber evidence="1">3.1.1.29</ecNumber>
    </recommendedName>
</protein>
<keyword id="KW-0963">Cytoplasm</keyword>
<keyword id="KW-0378">Hydrolase</keyword>
<keyword id="KW-0694">RNA-binding</keyword>
<keyword id="KW-0820">tRNA-binding</keyword>
<name>PTH_CHLSY</name>
<accession>B9LE93</accession>
<proteinExistence type="inferred from homology"/>
<organism>
    <name type="scientific">Chloroflexus aurantiacus (strain ATCC 29364 / DSM 637 / Y-400-fl)</name>
    <dbReference type="NCBI Taxonomy" id="480224"/>
    <lineage>
        <taxon>Bacteria</taxon>
        <taxon>Bacillati</taxon>
        <taxon>Chloroflexota</taxon>
        <taxon>Chloroflexia</taxon>
        <taxon>Chloroflexales</taxon>
        <taxon>Chloroflexineae</taxon>
        <taxon>Chloroflexaceae</taxon>
        <taxon>Chloroflexus</taxon>
    </lineage>
</organism>
<feature type="chain" id="PRO_1000118383" description="Peptidyl-tRNA hydrolase">
    <location>
        <begin position="1"/>
        <end position="188"/>
    </location>
</feature>
<feature type="active site" description="Proton acceptor" evidence="1">
    <location>
        <position position="19"/>
    </location>
</feature>
<feature type="binding site" evidence="1">
    <location>
        <position position="14"/>
    </location>
    <ligand>
        <name>tRNA</name>
        <dbReference type="ChEBI" id="CHEBI:17843"/>
    </ligand>
</feature>
<feature type="binding site" evidence="1">
    <location>
        <position position="64"/>
    </location>
    <ligand>
        <name>tRNA</name>
        <dbReference type="ChEBI" id="CHEBI:17843"/>
    </ligand>
</feature>
<feature type="binding site" evidence="1">
    <location>
        <position position="66"/>
    </location>
    <ligand>
        <name>tRNA</name>
        <dbReference type="ChEBI" id="CHEBI:17843"/>
    </ligand>
</feature>
<feature type="binding site" evidence="1">
    <location>
        <position position="113"/>
    </location>
    <ligand>
        <name>tRNA</name>
        <dbReference type="ChEBI" id="CHEBI:17843"/>
    </ligand>
</feature>
<feature type="site" description="Discriminates between blocked and unblocked aminoacyl-tRNA" evidence="1">
    <location>
        <position position="9"/>
    </location>
</feature>
<feature type="site" description="Stabilizes the basic form of H active site to accept a proton" evidence="1">
    <location>
        <position position="92"/>
    </location>
</feature>
<sequence length="188" mass="20917">MWLIVGLGNPGERYARTRHNIGFRSVDTLAERHGLTFRPQRANSQLAEGNIYGQRVVLAKPQTYMNLSGQAVVALCNWYKIDPARELLVIYDDLDLPFAKLRIRERGSAGTHNGMRSIVAQLGTTEFPRLRVGIGQPPGKMDAADYVLGRFTPDEEAALPDLLGRIADAVEVILREGLTTAMNRYNPL</sequence>
<comment type="function">
    <text evidence="1">Hydrolyzes ribosome-free peptidyl-tRNAs (with 1 or more amino acids incorporated), which drop off the ribosome during protein synthesis, or as a result of ribosome stalling.</text>
</comment>
<comment type="function">
    <text evidence="1">Catalyzes the release of premature peptidyl moieties from peptidyl-tRNA molecules trapped in stalled 50S ribosomal subunits, and thus maintains levels of free tRNAs and 50S ribosomes.</text>
</comment>
<comment type="catalytic activity">
    <reaction evidence="1">
        <text>an N-acyl-L-alpha-aminoacyl-tRNA + H2O = an N-acyl-L-amino acid + a tRNA + H(+)</text>
        <dbReference type="Rhea" id="RHEA:54448"/>
        <dbReference type="Rhea" id="RHEA-COMP:10123"/>
        <dbReference type="Rhea" id="RHEA-COMP:13883"/>
        <dbReference type="ChEBI" id="CHEBI:15377"/>
        <dbReference type="ChEBI" id="CHEBI:15378"/>
        <dbReference type="ChEBI" id="CHEBI:59874"/>
        <dbReference type="ChEBI" id="CHEBI:78442"/>
        <dbReference type="ChEBI" id="CHEBI:138191"/>
        <dbReference type="EC" id="3.1.1.29"/>
    </reaction>
</comment>
<comment type="subunit">
    <text evidence="1">Monomer.</text>
</comment>
<comment type="subcellular location">
    <subcellularLocation>
        <location evidence="1">Cytoplasm</location>
    </subcellularLocation>
</comment>
<comment type="similarity">
    <text evidence="1">Belongs to the PTH family.</text>
</comment>
<reference key="1">
    <citation type="submission" date="2009-01" db="EMBL/GenBank/DDBJ databases">
        <title>Complete sequence of Chloroflexus sp. Y-400-fl.</title>
        <authorList>
            <consortium name="US DOE Joint Genome Institute"/>
            <person name="Lucas S."/>
            <person name="Copeland A."/>
            <person name="Lapidus A."/>
            <person name="Glavina del Rio T."/>
            <person name="Dalin E."/>
            <person name="Tice H."/>
            <person name="Bruce D."/>
            <person name="Goodwin L."/>
            <person name="Pitluck S."/>
            <person name="Sims D."/>
            <person name="Kiss H."/>
            <person name="Brettin T."/>
            <person name="Detter J.C."/>
            <person name="Han C."/>
            <person name="Larimer F."/>
            <person name="Land M."/>
            <person name="Hauser L."/>
            <person name="Kyrpides N."/>
            <person name="Ovchinnikova G."/>
            <person name="Bryant D.A."/>
            <person name="Richardson P."/>
        </authorList>
    </citation>
    <scope>NUCLEOTIDE SEQUENCE [LARGE SCALE GENOMIC DNA]</scope>
    <source>
        <strain>ATCC 29364 / DSM 637 / Y-400-fl</strain>
    </source>
</reference>
<gene>
    <name evidence="1" type="primary">pth</name>
    <name type="ordered locus">Chy400_1801</name>
</gene>
<dbReference type="EC" id="3.1.1.29" evidence="1"/>
<dbReference type="EMBL" id="CP001364">
    <property type="protein sequence ID" value="ACM53209.1"/>
    <property type="molecule type" value="Genomic_DNA"/>
</dbReference>
<dbReference type="SMR" id="B9LE93"/>
<dbReference type="KEGG" id="chl:Chy400_1801"/>
<dbReference type="HOGENOM" id="CLU_062456_4_1_0"/>
<dbReference type="OrthoDB" id="9800507at2"/>
<dbReference type="GO" id="GO:0005737">
    <property type="term" value="C:cytoplasm"/>
    <property type="evidence" value="ECO:0007669"/>
    <property type="project" value="UniProtKB-SubCell"/>
</dbReference>
<dbReference type="GO" id="GO:0004045">
    <property type="term" value="F:peptidyl-tRNA hydrolase activity"/>
    <property type="evidence" value="ECO:0007669"/>
    <property type="project" value="UniProtKB-UniRule"/>
</dbReference>
<dbReference type="GO" id="GO:0000049">
    <property type="term" value="F:tRNA binding"/>
    <property type="evidence" value="ECO:0007669"/>
    <property type="project" value="UniProtKB-UniRule"/>
</dbReference>
<dbReference type="GO" id="GO:0006515">
    <property type="term" value="P:protein quality control for misfolded or incompletely synthesized proteins"/>
    <property type="evidence" value="ECO:0007669"/>
    <property type="project" value="UniProtKB-UniRule"/>
</dbReference>
<dbReference type="GO" id="GO:0072344">
    <property type="term" value="P:rescue of stalled ribosome"/>
    <property type="evidence" value="ECO:0007669"/>
    <property type="project" value="UniProtKB-UniRule"/>
</dbReference>
<dbReference type="CDD" id="cd00462">
    <property type="entry name" value="PTH"/>
    <property type="match status" value="1"/>
</dbReference>
<dbReference type="FunFam" id="3.40.50.1470:FF:000001">
    <property type="entry name" value="Peptidyl-tRNA hydrolase"/>
    <property type="match status" value="1"/>
</dbReference>
<dbReference type="Gene3D" id="3.40.50.1470">
    <property type="entry name" value="Peptidyl-tRNA hydrolase"/>
    <property type="match status" value="1"/>
</dbReference>
<dbReference type="HAMAP" id="MF_00083">
    <property type="entry name" value="Pept_tRNA_hydro_bact"/>
    <property type="match status" value="1"/>
</dbReference>
<dbReference type="InterPro" id="IPR001328">
    <property type="entry name" value="Pept_tRNA_hydro"/>
</dbReference>
<dbReference type="InterPro" id="IPR018171">
    <property type="entry name" value="Pept_tRNA_hydro_CS"/>
</dbReference>
<dbReference type="InterPro" id="IPR036416">
    <property type="entry name" value="Pept_tRNA_hydro_sf"/>
</dbReference>
<dbReference type="NCBIfam" id="TIGR00447">
    <property type="entry name" value="pth"/>
    <property type="match status" value="1"/>
</dbReference>
<dbReference type="PANTHER" id="PTHR17224">
    <property type="entry name" value="PEPTIDYL-TRNA HYDROLASE"/>
    <property type="match status" value="1"/>
</dbReference>
<dbReference type="PANTHER" id="PTHR17224:SF1">
    <property type="entry name" value="PEPTIDYL-TRNA HYDROLASE"/>
    <property type="match status" value="1"/>
</dbReference>
<dbReference type="Pfam" id="PF01195">
    <property type="entry name" value="Pept_tRNA_hydro"/>
    <property type="match status" value="1"/>
</dbReference>
<dbReference type="SUPFAM" id="SSF53178">
    <property type="entry name" value="Peptidyl-tRNA hydrolase-like"/>
    <property type="match status" value="1"/>
</dbReference>
<dbReference type="PROSITE" id="PS01196">
    <property type="entry name" value="PEPT_TRNA_HYDROL_2"/>
    <property type="match status" value="1"/>
</dbReference>